<sequence length="274" mass="29693">MAIVKCKPTSPGRRFVVKVVNQELHKGAPHAPLLEKKSKSGGRNNNGRITTRHIGGGHKQHYRLVDFRRNDKDGIAATVERIEYDPNRTAHIALLLYADGERRYIIAPKGVSAGDQLIAGALAPIKPGNALQLRNIPVGSTVHGIELKPGKGAQIARSAGASAQLIAREGVYVTLRLRSGEMRKVLSECRATLGEVSNSEHSLRSLGKAGAKRWRGVRPTVRGVAMNPVDHPHGGGEGRTSGGRHPVSPWGFPTKGAKTRGNKRTDKMIVRRRK</sequence>
<comment type="function">
    <text evidence="1">One of the primary rRNA binding proteins. Required for association of the 30S and 50S subunits to form the 70S ribosome, for tRNA binding and peptide bond formation. It has been suggested to have peptidyltransferase activity; this is somewhat controversial. Makes several contacts with the 16S rRNA in the 70S ribosome.</text>
</comment>
<comment type="subunit">
    <text evidence="1">Part of the 50S ribosomal subunit. Forms a bridge to the 30S subunit in the 70S ribosome.</text>
</comment>
<comment type="similarity">
    <text evidence="1">Belongs to the universal ribosomal protein uL2 family.</text>
</comment>
<name>RL2_PSE14</name>
<protein>
    <recommendedName>
        <fullName evidence="1">Large ribosomal subunit protein uL2</fullName>
    </recommendedName>
    <alternativeName>
        <fullName evidence="3">50S ribosomal protein L2</fullName>
    </alternativeName>
</protein>
<gene>
    <name evidence="1" type="primary">rplB</name>
    <name type="ordered locus">PSPPH_4589</name>
</gene>
<feature type="chain" id="PRO_0000237229" description="Large ribosomal subunit protein uL2">
    <location>
        <begin position="1"/>
        <end position="274"/>
    </location>
</feature>
<feature type="region of interest" description="Disordered" evidence="2">
    <location>
        <begin position="28"/>
        <end position="54"/>
    </location>
</feature>
<feature type="region of interest" description="Disordered" evidence="2">
    <location>
        <begin position="224"/>
        <end position="274"/>
    </location>
</feature>
<feature type="compositionally biased region" description="Basic and acidic residues" evidence="2">
    <location>
        <begin position="263"/>
        <end position="274"/>
    </location>
</feature>
<organism>
    <name type="scientific">Pseudomonas savastanoi pv. phaseolicola (strain 1448A / Race 6)</name>
    <name type="common">Pseudomonas syringae pv. phaseolicola (strain 1448A / Race 6)</name>
    <dbReference type="NCBI Taxonomy" id="264730"/>
    <lineage>
        <taxon>Bacteria</taxon>
        <taxon>Pseudomonadati</taxon>
        <taxon>Pseudomonadota</taxon>
        <taxon>Gammaproteobacteria</taxon>
        <taxon>Pseudomonadales</taxon>
        <taxon>Pseudomonadaceae</taxon>
        <taxon>Pseudomonas</taxon>
    </lineage>
</organism>
<reference key="1">
    <citation type="journal article" date="2005" name="J. Bacteriol.">
        <title>Whole-genome sequence analysis of Pseudomonas syringae pv. phaseolicola 1448A reveals divergence among pathovars in genes involved in virulence and transposition.</title>
        <authorList>
            <person name="Joardar V."/>
            <person name="Lindeberg M."/>
            <person name="Jackson R.W."/>
            <person name="Selengut J."/>
            <person name="Dodson R."/>
            <person name="Brinkac L.M."/>
            <person name="Daugherty S.C."/>
            <person name="DeBoy R.T."/>
            <person name="Durkin A.S."/>
            <person name="Gwinn Giglio M."/>
            <person name="Madupu R."/>
            <person name="Nelson W.C."/>
            <person name="Rosovitz M.J."/>
            <person name="Sullivan S.A."/>
            <person name="Crabtree J."/>
            <person name="Creasy T."/>
            <person name="Davidsen T.M."/>
            <person name="Haft D.H."/>
            <person name="Zafar N."/>
            <person name="Zhou L."/>
            <person name="Halpin R."/>
            <person name="Holley T."/>
            <person name="Khouri H.M."/>
            <person name="Feldblyum T.V."/>
            <person name="White O."/>
            <person name="Fraser C.M."/>
            <person name="Chatterjee A.K."/>
            <person name="Cartinhour S."/>
            <person name="Schneider D."/>
            <person name="Mansfield J.W."/>
            <person name="Collmer A."/>
            <person name="Buell R."/>
        </authorList>
    </citation>
    <scope>NUCLEOTIDE SEQUENCE [LARGE SCALE GENOMIC DNA]</scope>
    <source>
        <strain>1448A / Race 6</strain>
    </source>
</reference>
<proteinExistence type="inferred from homology"/>
<keyword id="KW-0687">Ribonucleoprotein</keyword>
<keyword id="KW-0689">Ribosomal protein</keyword>
<keyword id="KW-0694">RNA-binding</keyword>
<keyword id="KW-0699">rRNA-binding</keyword>
<evidence type="ECO:0000255" key="1">
    <source>
        <dbReference type="HAMAP-Rule" id="MF_01320"/>
    </source>
</evidence>
<evidence type="ECO:0000256" key="2">
    <source>
        <dbReference type="SAM" id="MobiDB-lite"/>
    </source>
</evidence>
<evidence type="ECO:0000305" key="3"/>
<dbReference type="EMBL" id="CP000058">
    <property type="protein sequence ID" value="AAZ37455.1"/>
    <property type="molecule type" value="Genomic_DNA"/>
</dbReference>
<dbReference type="RefSeq" id="WP_003317104.1">
    <property type="nucleotide sequence ID" value="NC_005773.3"/>
</dbReference>
<dbReference type="SMR" id="Q48D39"/>
<dbReference type="GeneID" id="96221027"/>
<dbReference type="KEGG" id="psp:PSPPH_4589"/>
<dbReference type="eggNOG" id="COG0090">
    <property type="taxonomic scope" value="Bacteria"/>
</dbReference>
<dbReference type="HOGENOM" id="CLU_036235_2_1_6"/>
<dbReference type="Proteomes" id="UP000000551">
    <property type="component" value="Chromosome"/>
</dbReference>
<dbReference type="GO" id="GO:0015934">
    <property type="term" value="C:large ribosomal subunit"/>
    <property type="evidence" value="ECO:0007669"/>
    <property type="project" value="InterPro"/>
</dbReference>
<dbReference type="GO" id="GO:0019843">
    <property type="term" value="F:rRNA binding"/>
    <property type="evidence" value="ECO:0007669"/>
    <property type="project" value="UniProtKB-UniRule"/>
</dbReference>
<dbReference type="GO" id="GO:0003735">
    <property type="term" value="F:structural constituent of ribosome"/>
    <property type="evidence" value="ECO:0007669"/>
    <property type="project" value="InterPro"/>
</dbReference>
<dbReference type="GO" id="GO:0016740">
    <property type="term" value="F:transferase activity"/>
    <property type="evidence" value="ECO:0007669"/>
    <property type="project" value="InterPro"/>
</dbReference>
<dbReference type="GO" id="GO:0002181">
    <property type="term" value="P:cytoplasmic translation"/>
    <property type="evidence" value="ECO:0007669"/>
    <property type="project" value="TreeGrafter"/>
</dbReference>
<dbReference type="FunFam" id="2.30.30.30:FF:000001">
    <property type="entry name" value="50S ribosomal protein L2"/>
    <property type="match status" value="1"/>
</dbReference>
<dbReference type="FunFam" id="2.40.50.140:FF:000003">
    <property type="entry name" value="50S ribosomal protein L2"/>
    <property type="match status" value="1"/>
</dbReference>
<dbReference type="FunFam" id="4.10.950.10:FF:000001">
    <property type="entry name" value="50S ribosomal protein L2"/>
    <property type="match status" value="1"/>
</dbReference>
<dbReference type="Gene3D" id="2.30.30.30">
    <property type="match status" value="1"/>
</dbReference>
<dbReference type="Gene3D" id="2.40.50.140">
    <property type="entry name" value="Nucleic acid-binding proteins"/>
    <property type="match status" value="1"/>
</dbReference>
<dbReference type="Gene3D" id="4.10.950.10">
    <property type="entry name" value="Ribosomal protein L2, domain 3"/>
    <property type="match status" value="1"/>
</dbReference>
<dbReference type="HAMAP" id="MF_01320_B">
    <property type="entry name" value="Ribosomal_uL2_B"/>
    <property type="match status" value="1"/>
</dbReference>
<dbReference type="InterPro" id="IPR012340">
    <property type="entry name" value="NA-bd_OB-fold"/>
</dbReference>
<dbReference type="InterPro" id="IPR014722">
    <property type="entry name" value="Rib_uL2_dom2"/>
</dbReference>
<dbReference type="InterPro" id="IPR002171">
    <property type="entry name" value="Ribosomal_uL2"/>
</dbReference>
<dbReference type="InterPro" id="IPR005880">
    <property type="entry name" value="Ribosomal_uL2_bac/org-type"/>
</dbReference>
<dbReference type="InterPro" id="IPR022669">
    <property type="entry name" value="Ribosomal_uL2_C"/>
</dbReference>
<dbReference type="InterPro" id="IPR022671">
    <property type="entry name" value="Ribosomal_uL2_CS"/>
</dbReference>
<dbReference type="InterPro" id="IPR014726">
    <property type="entry name" value="Ribosomal_uL2_dom3"/>
</dbReference>
<dbReference type="InterPro" id="IPR022666">
    <property type="entry name" value="Ribosomal_uL2_RNA-bd_dom"/>
</dbReference>
<dbReference type="InterPro" id="IPR008991">
    <property type="entry name" value="Translation_prot_SH3-like_sf"/>
</dbReference>
<dbReference type="NCBIfam" id="TIGR01171">
    <property type="entry name" value="rplB_bact"/>
    <property type="match status" value="1"/>
</dbReference>
<dbReference type="PANTHER" id="PTHR13691:SF5">
    <property type="entry name" value="LARGE RIBOSOMAL SUBUNIT PROTEIN UL2M"/>
    <property type="match status" value="1"/>
</dbReference>
<dbReference type="PANTHER" id="PTHR13691">
    <property type="entry name" value="RIBOSOMAL PROTEIN L2"/>
    <property type="match status" value="1"/>
</dbReference>
<dbReference type="Pfam" id="PF00181">
    <property type="entry name" value="Ribosomal_L2"/>
    <property type="match status" value="1"/>
</dbReference>
<dbReference type="Pfam" id="PF03947">
    <property type="entry name" value="Ribosomal_L2_C"/>
    <property type="match status" value="1"/>
</dbReference>
<dbReference type="PIRSF" id="PIRSF002158">
    <property type="entry name" value="Ribosomal_L2"/>
    <property type="match status" value="1"/>
</dbReference>
<dbReference type="SMART" id="SM01383">
    <property type="entry name" value="Ribosomal_L2"/>
    <property type="match status" value="1"/>
</dbReference>
<dbReference type="SMART" id="SM01382">
    <property type="entry name" value="Ribosomal_L2_C"/>
    <property type="match status" value="1"/>
</dbReference>
<dbReference type="SUPFAM" id="SSF50249">
    <property type="entry name" value="Nucleic acid-binding proteins"/>
    <property type="match status" value="1"/>
</dbReference>
<dbReference type="SUPFAM" id="SSF50104">
    <property type="entry name" value="Translation proteins SH3-like domain"/>
    <property type="match status" value="1"/>
</dbReference>
<dbReference type="PROSITE" id="PS00467">
    <property type="entry name" value="RIBOSOMAL_L2"/>
    <property type="match status" value="1"/>
</dbReference>
<accession>Q48D39</accession>